<proteinExistence type="inferred from homology"/>
<comment type="function">
    <text evidence="1">Forms a proton-selective ion channel that is necessary for the efficient release of the viral genome during virus entry. After attaching to the cell surface, the virion enters the cell by endocytosis. Acidification of the endosome triggers M2 ion channel activity. The influx of protons into virion interior is believed to disrupt interactions between the viral ribonucleoprotein (RNP), matrix protein 1 (M1), and lipid bilayers, thereby freeing the viral genome from interaction with viral proteins and enabling RNA segments to migrate to the host cell nucleus, where influenza virus RNA transcription and replication occur. Also plays a role in viral proteins secretory pathway. Elevates the intravesicular pH of normally acidic compartments, such as trans-Golgi network, preventing newly formed hemagglutinin from premature switching to the fusion-active conformation.</text>
</comment>
<comment type="activity regulation">
    <text>The M2 protein from most influenza A strains is inhibited by amantadine and rimantadine, resulting in viral uncoating incapacity. Emergence of amantadine-resistant variants is usually rapid.</text>
</comment>
<comment type="subunit">
    <text evidence="1">Homotetramer; composed of two disulfide-linked dimers held together by non-covalent interactions. May interact with matrix protein 1.</text>
</comment>
<comment type="subcellular location">
    <subcellularLocation>
        <location evidence="1">Virion membrane</location>
    </subcellularLocation>
    <subcellularLocation>
        <location evidence="1">Host apical cell membrane</location>
        <topology evidence="1">Single-pass type III membrane protein</topology>
    </subcellularLocation>
    <text evidence="1">Abundantly expressed at the apical plasma membrane in infected polarized epithelial cells, in close proximity to budding and assembled virions. Minor component of virions (only 16-20 molecules/virion).</text>
</comment>
<comment type="alternative products">
    <event type="alternative splicing"/>
    <isoform>
        <id>P0C5T6-1</id>
        <name>M2</name>
        <sequence type="displayed"/>
    </isoform>
    <isoform>
        <id>Q2LG20-1</id>
        <name>M1</name>
        <sequence type="external"/>
    </isoform>
    <text>Only the first 9 residues are shared by the 2 isoforms.</text>
</comment>
<comment type="domain">
    <text evidence="1">Cytoplasmic tail plays an important role in virion assembly and morphogenesis.</text>
</comment>
<comment type="miscellaneous">
    <text evidence="1">When the channel is activated, one or more imidazole moieties of His-37 probably become bi-protonated.</text>
</comment>
<comment type="similarity">
    <text evidence="1">Belongs to the influenza viruses matrix protein M2 family.</text>
</comment>
<feature type="chain" id="PRO_0000311635" description="Matrix protein 2">
    <location>
        <begin position="1"/>
        <end position="97"/>
    </location>
</feature>
<feature type="topological domain" description="Virion surface" evidence="1">
    <location>
        <begin position="1"/>
        <end position="22"/>
    </location>
</feature>
<feature type="transmembrane region" description="Helical; Signal-anchor for type III membrane protein" evidence="1">
    <location>
        <begin position="23"/>
        <end position="43"/>
    </location>
</feature>
<feature type="topological domain" description="Intravirion" evidence="1">
    <location>
        <begin position="44"/>
        <end position="97"/>
    </location>
</feature>
<feature type="region of interest" description="Disordered" evidence="2">
    <location>
        <begin position="62"/>
        <end position="83"/>
    </location>
</feature>
<feature type="site" description="Essential for channel activity, possibly by being protonated during channel activation, and by forming the channel gate and the selective filter" evidence="1">
    <location>
        <position position="37"/>
    </location>
</feature>
<feature type="site" description="Seems to be involved in pH gating" evidence="1">
    <location>
        <position position="41"/>
    </location>
</feature>
<feature type="modified residue" description="Phosphoserine; by host" evidence="1">
    <location>
        <position position="64"/>
    </location>
</feature>
<feature type="modified residue" description="Phosphoserine; by host" evidence="1">
    <location>
        <position position="82"/>
    </location>
</feature>
<feature type="lipid moiety-binding region" description="S-palmitoyl cysteine; by host" evidence="1">
    <location>
        <position position="50"/>
    </location>
</feature>
<feature type="disulfide bond" description="Interchain (with C-17)" evidence="1">
    <location>
        <position position="17"/>
    </location>
</feature>
<feature type="disulfide bond" description="Interchain (with C-19)" evidence="1">
    <location>
        <position position="19"/>
    </location>
</feature>
<sequence length="97" mass="11200">MSLLTEVETPTRNEWECRCSDSSDPLIVAASIIGILHLILWILDRLFFKCIYRRLKYGLKRGPSTAGVPESMREEYRQEQQSAVDVDDGHFVNIELE</sequence>
<organism>
    <name type="scientific">Influenza A virus (strain A/Goose/Guangxi/345/2005 H5N1 genotype G)</name>
    <dbReference type="NCBI Taxonomy" id="365089"/>
    <lineage>
        <taxon>Viruses</taxon>
        <taxon>Riboviria</taxon>
        <taxon>Orthornavirae</taxon>
        <taxon>Negarnaviricota</taxon>
        <taxon>Polyploviricotina</taxon>
        <taxon>Insthoviricetes</taxon>
        <taxon>Articulavirales</taxon>
        <taxon>Orthomyxoviridae</taxon>
        <taxon>Alphainfluenzavirus</taxon>
        <taxon>Alphainfluenzavirus influenzae</taxon>
        <taxon>Influenza A virus</taxon>
    </lineage>
</organism>
<accession>P0C5T6</accession>
<dbReference type="EMBL" id="DQ320962">
    <property type="status" value="NOT_ANNOTATED_CDS"/>
    <property type="molecule type" value="Genomic_RNA"/>
</dbReference>
<dbReference type="SMR" id="P0C5T6"/>
<dbReference type="GO" id="GO:0020002">
    <property type="term" value="C:host cell plasma membrane"/>
    <property type="evidence" value="ECO:0007669"/>
    <property type="project" value="UniProtKB-SubCell"/>
</dbReference>
<dbReference type="GO" id="GO:0016020">
    <property type="term" value="C:membrane"/>
    <property type="evidence" value="ECO:0007669"/>
    <property type="project" value="UniProtKB-UniRule"/>
</dbReference>
<dbReference type="GO" id="GO:0055036">
    <property type="term" value="C:virion membrane"/>
    <property type="evidence" value="ECO:0007669"/>
    <property type="project" value="UniProtKB-SubCell"/>
</dbReference>
<dbReference type="GO" id="GO:0005216">
    <property type="term" value="F:monoatomic ion channel activity"/>
    <property type="evidence" value="ECO:0007669"/>
    <property type="project" value="UniProtKB-UniRule"/>
</dbReference>
<dbReference type="GO" id="GO:0015078">
    <property type="term" value="F:proton transmembrane transporter activity"/>
    <property type="evidence" value="ECO:0007669"/>
    <property type="project" value="UniProtKB-UniRule"/>
</dbReference>
<dbReference type="GO" id="GO:0051259">
    <property type="term" value="P:protein complex oligomerization"/>
    <property type="evidence" value="ECO:0007669"/>
    <property type="project" value="UniProtKB-UniRule"/>
</dbReference>
<dbReference type="GO" id="GO:0044694">
    <property type="term" value="P:symbiont genome entry into host cell via pore formation in plasma membrane"/>
    <property type="evidence" value="ECO:0007669"/>
    <property type="project" value="UniProtKB-UniRule"/>
</dbReference>
<dbReference type="GO" id="GO:0140321">
    <property type="term" value="P:symbiont-mediated suppression of host autophagy"/>
    <property type="evidence" value="ECO:0007669"/>
    <property type="project" value="UniProtKB-KW"/>
</dbReference>
<dbReference type="Gene3D" id="6.10.250.1640">
    <property type="match status" value="1"/>
</dbReference>
<dbReference type="HAMAP" id="MF_04069">
    <property type="entry name" value="INFV_M2"/>
    <property type="match status" value="1"/>
</dbReference>
<dbReference type="InterPro" id="IPR002089">
    <property type="entry name" value="Flu_M2"/>
</dbReference>
<dbReference type="Pfam" id="PF00599">
    <property type="entry name" value="Flu_M2"/>
    <property type="match status" value="1"/>
</dbReference>
<name>M2_I05A1</name>
<reference key="1">
    <citation type="journal article" date="2006" name="Proc. Natl. Acad. Sci. U.S.A.">
        <title>Emergence and predominance of an H5N1 influenza variant in China.</title>
        <authorList>
            <person name="Smith G.J."/>
            <person name="Fan X.H."/>
            <person name="Wang J."/>
            <person name="Li K.S."/>
            <person name="Qin K."/>
            <person name="Zhang J.X."/>
            <person name="Vijaykrishna D."/>
            <person name="Cheung C.L."/>
            <person name="Huang K."/>
            <person name="Rayner J.M."/>
            <person name="Peiris J.S."/>
            <person name="Chen H."/>
            <person name="Webster R.G."/>
            <person name="Guan Y."/>
        </authorList>
    </citation>
    <scope>NUCLEOTIDE SEQUENCE [GENOMIC RNA]</scope>
</reference>
<gene>
    <name evidence="1" type="primary">M</name>
</gene>
<keyword id="KW-0025">Alternative splicing</keyword>
<keyword id="KW-1015">Disulfide bond</keyword>
<keyword id="KW-1032">Host cell membrane</keyword>
<keyword id="KW-1043">Host membrane</keyword>
<keyword id="KW-0945">Host-virus interaction</keyword>
<keyword id="KW-0375">Hydrogen ion transport</keyword>
<keyword id="KW-1083">Inhibition of host autophagy by virus</keyword>
<keyword id="KW-0407">Ion channel</keyword>
<keyword id="KW-0406">Ion transport</keyword>
<keyword id="KW-0449">Lipoprotein</keyword>
<keyword id="KW-0472">Membrane</keyword>
<keyword id="KW-0564">Palmitate</keyword>
<keyword id="KW-0597">Phosphoprotein</keyword>
<keyword id="KW-0735">Signal-anchor</keyword>
<keyword id="KW-0812">Transmembrane</keyword>
<keyword id="KW-1133">Transmembrane helix</keyword>
<keyword id="KW-0813">Transport</keyword>
<keyword id="KW-1182">Viral ion channel</keyword>
<keyword id="KW-0946">Virion</keyword>
<protein>
    <recommendedName>
        <fullName evidence="1">Matrix protein 2</fullName>
    </recommendedName>
    <alternativeName>
        <fullName evidence="1">Proton channel protein M2</fullName>
    </alternativeName>
</protein>
<evidence type="ECO:0000255" key="1">
    <source>
        <dbReference type="HAMAP-Rule" id="MF_04069"/>
    </source>
</evidence>
<evidence type="ECO:0000256" key="2">
    <source>
        <dbReference type="SAM" id="MobiDB-lite"/>
    </source>
</evidence>
<organismHost>
    <name type="scientific">Aves</name>
    <dbReference type="NCBI Taxonomy" id="8782"/>
</organismHost>
<organismHost>
    <name type="scientific">Felis catus</name>
    <name type="common">Cat</name>
    <name type="synonym">Felis silvestris catus</name>
    <dbReference type="NCBI Taxonomy" id="9685"/>
</organismHost>
<organismHost>
    <name type="scientific">Homo sapiens</name>
    <name type="common">Human</name>
    <dbReference type="NCBI Taxonomy" id="9606"/>
</organismHost>
<organismHost>
    <name type="scientific">Panthera pardus</name>
    <name type="common">Leopard</name>
    <name type="synonym">Felis pardus</name>
    <dbReference type="NCBI Taxonomy" id="9691"/>
</organismHost>
<organismHost>
    <name type="scientific">Panthera tigris</name>
    <name type="common">Tiger</name>
    <dbReference type="NCBI Taxonomy" id="9694"/>
</organismHost>
<organismHost>
    <name type="scientific">Sus scrofa</name>
    <name type="common">Pig</name>
    <dbReference type="NCBI Taxonomy" id="9823"/>
</organismHost>